<comment type="function">
    <text evidence="4">Major facilitator transporter involved in fusarinine C (FsC) uptake (PubMed:36125294). In contrast to TAFC-mediated iron uptake, FsC-mediated iron uptake via mirD does not play a significant role during infection (PubMed:36125294).</text>
</comment>
<comment type="subcellular location">
    <subcellularLocation>
        <location evidence="7">Cell membrane</location>
        <topology evidence="1">Multi-pass membrane protein</topology>
    </subcellularLocation>
</comment>
<comment type="induction">
    <text evidence="4">Expression is repressed by iron.</text>
</comment>
<comment type="disruption phenotype">
    <text evidence="4">Impairs FsC-mediated iron uptake.</text>
</comment>
<comment type="similarity">
    <text evidence="6">Belongs to the major facilitator superfamily.</text>
</comment>
<organism>
    <name type="scientific">Aspergillus fumigatus (strain ATCC MYA-4609 / CBS 101355 / FGSC A1100 / Af293)</name>
    <name type="common">Neosartorya fumigata</name>
    <dbReference type="NCBI Taxonomy" id="330879"/>
    <lineage>
        <taxon>Eukaryota</taxon>
        <taxon>Fungi</taxon>
        <taxon>Dikarya</taxon>
        <taxon>Ascomycota</taxon>
        <taxon>Pezizomycotina</taxon>
        <taxon>Eurotiomycetes</taxon>
        <taxon>Eurotiomycetidae</taxon>
        <taxon>Eurotiales</taxon>
        <taxon>Aspergillaceae</taxon>
        <taxon>Aspergillus</taxon>
        <taxon>Aspergillus subgen. Fumigati</taxon>
    </lineage>
</organism>
<reference key="1">
    <citation type="journal article" date="2005" name="Nature">
        <title>Genomic sequence of the pathogenic and allergenic filamentous fungus Aspergillus fumigatus.</title>
        <authorList>
            <person name="Nierman W.C."/>
            <person name="Pain A."/>
            <person name="Anderson M.J."/>
            <person name="Wortman J.R."/>
            <person name="Kim H.S."/>
            <person name="Arroyo J."/>
            <person name="Berriman M."/>
            <person name="Abe K."/>
            <person name="Archer D.B."/>
            <person name="Bermejo C."/>
            <person name="Bennett J.W."/>
            <person name="Bowyer P."/>
            <person name="Chen D."/>
            <person name="Collins M."/>
            <person name="Coulsen R."/>
            <person name="Davies R."/>
            <person name="Dyer P.S."/>
            <person name="Farman M.L."/>
            <person name="Fedorova N."/>
            <person name="Fedorova N.D."/>
            <person name="Feldblyum T.V."/>
            <person name="Fischer R."/>
            <person name="Fosker N."/>
            <person name="Fraser A."/>
            <person name="Garcia J.L."/>
            <person name="Garcia M.J."/>
            <person name="Goble A."/>
            <person name="Goldman G.H."/>
            <person name="Gomi K."/>
            <person name="Griffith-Jones S."/>
            <person name="Gwilliam R."/>
            <person name="Haas B.J."/>
            <person name="Haas H."/>
            <person name="Harris D.E."/>
            <person name="Horiuchi H."/>
            <person name="Huang J."/>
            <person name="Humphray S."/>
            <person name="Jimenez J."/>
            <person name="Keller N."/>
            <person name="Khouri H."/>
            <person name="Kitamoto K."/>
            <person name="Kobayashi T."/>
            <person name="Konzack S."/>
            <person name="Kulkarni R."/>
            <person name="Kumagai T."/>
            <person name="Lafton A."/>
            <person name="Latge J.-P."/>
            <person name="Li W."/>
            <person name="Lord A."/>
            <person name="Lu C."/>
            <person name="Majoros W.H."/>
            <person name="May G.S."/>
            <person name="Miller B.L."/>
            <person name="Mohamoud Y."/>
            <person name="Molina M."/>
            <person name="Monod M."/>
            <person name="Mouyna I."/>
            <person name="Mulligan S."/>
            <person name="Murphy L.D."/>
            <person name="O'Neil S."/>
            <person name="Paulsen I."/>
            <person name="Penalva M.A."/>
            <person name="Pertea M."/>
            <person name="Price C."/>
            <person name="Pritchard B.L."/>
            <person name="Quail M.A."/>
            <person name="Rabbinowitsch E."/>
            <person name="Rawlins N."/>
            <person name="Rajandream M.A."/>
            <person name="Reichard U."/>
            <person name="Renauld H."/>
            <person name="Robson G.D."/>
            <person name="Rodriguez de Cordoba S."/>
            <person name="Rodriguez-Pena J.M."/>
            <person name="Ronning C.M."/>
            <person name="Rutter S."/>
            <person name="Salzberg S.L."/>
            <person name="Sanchez M."/>
            <person name="Sanchez-Ferrero J.C."/>
            <person name="Saunders D."/>
            <person name="Seeger K."/>
            <person name="Squares R."/>
            <person name="Squares S."/>
            <person name="Takeuchi M."/>
            <person name="Tekaia F."/>
            <person name="Turner G."/>
            <person name="Vazquez de Aldana C.R."/>
            <person name="Weidman J."/>
            <person name="White O."/>
            <person name="Woodward J.R."/>
            <person name="Yu J.-H."/>
            <person name="Fraser C.M."/>
            <person name="Galagan J.E."/>
            <person name="Asai K."/>
            <person name="Machida M."/>
            <person name="Hall N."/>
            <person name="Barrell B.G."/>
            <person name="Denning D.W."/>
        </authorList>
    </citation>
    <scope>NUCLEOTIDE SEQUENCE [LARGE SCALE GENOMIC DNA]</scope>
    <source>
        <strain>ATCC MYA-4609 / CBS 101355 / FGSC A1100 / Af293</strain>
    </source>
</reference>
<reference key="2">
    <citation type="journal article" date="2022" name="MBio">
        <title>Uptake of the siderophore triacetylfusarinine C, but not fusarinine C, is crucial for virulence of Aspergillus fumigatus.</title>
        <authorList>
            <person name="Aguiar M."/>
            <person name="Orasch T."/>
            <person name="Shadkchan Y."/>
            <person name="Caballero P."/>
            <person name="Pfister J."/>
            <person name="Sastre-Velasquez L.E."/>
            <person name="Gsaller F."/>
            <person name="Decristoforo C."/>
            <person name="Osherov N."/>
            <person name="Haas H."/>
        </authorList>
    </citation>
    <scope>FUNCTION</scope>
    <scope>DISRUPTION PHENOTYPE</scope>
    <scope>INDUCTION</scope>
    <scope>TRANSPORT ACTIVITY</scope>
</reference>
<sequence length="598" mass="65969">MLSSWQKKFFQTPEHPPAEGIAPPRDDGVPNPEPVTYPDTKYPSDVVNHDAGEMLPNEEAQDGVTQAEAITLTWSKISLGAAYFLMWLLYLVNGFQASITGNLSAYVTSGFESHSLIPVISIVSSVMSAATYMPLAKVLNLWDRSIGFIIMVAFATLGLILSATCHDIGTYCAAQVFYSIGFAGIIFSVDVITADTSTLRDRGLAYAFTSSPYIITAFGGPAAAEHFYDSNWRWAYGCFSIVLPVVALPMFCLLRWNRHKAKKSGLLKDKADSGRTWMESIRHYIIEFDILGVFFLAAGLVLFLLPFSIAGSTEDDWKSASIITMLVIGFVCLLVFALVERFVAPVPFLPWALLASRTVLGACMLDVCYQIAYYCWFNYYTSYLQVVYGTSITTAGYITSIFDVVSGVWLFIVGFLIKKTNRFRWLLFIAVPLYILGVGLMIYFRKPSWSVGYMIMCQIFIAFAGGTMIICQQVAVLAASDHDHAASSLAFLNVFGTMGSAVGSSISGAIWTHTLPGALQRLLPDSVKADWQTIYDSLEEQLSYERGTLIRQAIALAYASTQSKMLIAGTAIMALSLVWMFVIRDIKLTKTQTKGVLF</sequence>
<proteinExistence type="evidence at transcript level"/>
<feature type="chain" id="PRO_0000457334" description="MFS siderochrome iron transporter D">
    <location>
        <begin position="1"/>
        <end position="598"/>
    </location>
</feature>
<feature type="topological domain" description="Cytoplasmic" evidence="6">
    <location>
        <begin position="1"/>
        <end position="76"/>
    </location>
</feature>
<feature type="transmembrane region" description="Helical" evidence="1">
    <location>
        <begin position="77"/>
        <end position="97"/>
    </location>
</feature>
<feature type="topological domain" description="Extracellular" evidence="6">
    <location>
        <begin position="98"/>
        <end position="115"/>
    </location>
</feature>
<feature type="transmembrane region" description="Helical" evidence="1">
    <location>
        <begin position="116"/>
        <end position="136"/>
    </location>
</feature>
<feature type="topological domain" description="Cytoplasmic" evidence="6">
    <location>
        <begin position="137"/>
        <end position="144"/>
    </location>
</feature>
<feature type="transmembrane region" description="Helical" evidence="1">
    <location>
        <begin position="145"/>
        <end position="165"/>
    </location>
</feature>
<feature type="topological domain" description="Extracellular" evidence="6">
    <location>
        <begin position="166"/>
        <end position="171"/>
    </location>
</feature>
<feature type="transmembrane region" description="Helical" evidence="1">
    <location>
        <begin position="172"/>
        <end position="192"/>
    </location>
</feature>
<feature type="topological domain" description="Cytoplasmic" evidence="6">
    <location>
        <begin position="193"/>
        <end position="203"/>
    </location>
</feature>
<feature type="transmembrane region" description="Helical" evidence="1">
    <location>
        <begin position="204"/>
        <end position="224"/>
    </location>
</feature>
<feature type="topological domain" description="Extracellular" evidence="6">
    <location>
        <begin position="225"/>
        <end position="233"/>
    </location>
</feature>
<feature type="transmembrane region" description="Helical" evidence="1">
    <location>
        <begin position="234"/>
        <end position="254"/>
    </location>
</feature>
<feature type="topological domain" description="Cytoplasmic" evidence="6">
    <location>
        <begin position="255"/>
        <end position="289"/>
    </location>
</feature>
<feature type="transmembrane region" description="Helical" evidence="1">
    <location>
        <begin position="290"/>
        <end position="310"/>
    </location>
</feature>
<feature type="topological domain" description="Extracellular" evidence="6">
    <location>
        <begin position="311"/>
        <end position="318"/>
    </location>
</feature>
<feature type="transmembrane region" description="Helical" evidence="1">
    <location>
        <begin position="319"/>
        <end position="339"/>
    </location>
</feature>
<feature type="topological domain" description="Cytoplasmic" evidence="6">
    <location>
        <begin position="340"/>
        <end position="341"/>
    </location>
</feature>
<feature type="transmembrane region" description="Helical" evidence="1">
    <location>
        <begin position="342"/>
        <end position="362"/>
    </location>
</feature>
<feature type="topological domain" description="Extracellular" evidence="6">
    <location>
        <begin position="363"/>
        <end position="396"/>
    </location>
</feature>
<feature type="transmembrane region" description="Helical" evidence="1">
    <location>
        <begin position="397"/>
        <end position="417"/>
    </location>
</feature>
<feature type="topological domain" description="Cytoplasmic" evidence="6">
    <location>
        <begin position="418"/>
        <end position="424"/>
    </location>
</feature>
<feature type="transmembrane region" description="Helical" evidence="1">
    <location>
        <begin position="425"/>
        <end position="445"/>
    </location>
</feature>
<feature type="topological domain" description="Extracellular" evidence="6">
    <location>
        <begin position="446"/>
        <end position="450"/>
    </location>
</feature>
<feature type="transmembrane region" description="Helical" evidence="1">
    <location>
        <begin position="451"/>
        <end position="471"/>
    </location>
</feature>
<feature type="topological domain" description="Cytoplasmic" evidence="6">
    <location>
        <begin position="472"/>
        <end position="490"/>
    </location>
</feature>
<feature type="transmembrane region" description="Helical" evidence="1">
    <location>
        <begin position="491"/>
        <end position="511"/>
    </location>
</feature>
<feature type="topological domain" description="Extracellular" evidence="6">
    <location>
        <begin position="512"/>
        <end position="562"/>
    </location>
</feature>
<feature type="transmembrane region" description="Helical" evidence="1">
    <location>
        <begin position="563"/>
        <end position="583"/>
    </location>
</feature>
<feature type="topological domain" description="Cytoplasmic" evidence="6">
    <location>
        <begin position="584"/>
        <end position="598"/>
    </location>
</feature>
<feature type="region of interest" description="Disordered" evidence="3">
    <location>
        <begin position="1"/>
        <end position="34"/>
    </location>
</feature>
<feature type="glycosylation site" description="N-linked (GlcNAc...) asparagine" evidence="2">
    <location>
        <position position="102"/>
    </location>
</feature>
<evidence type="ECO:0000255" key="1"/>
<evidence type="ECO:0000255" key="2">
    <source>
        <dbReference type="PROSITE-ProRule" id="PRU00498"/>
    </source>
</evidence>
<evidence type="ECO:0000256" key="3">
    <source>
        <dbReference type="SAM" id="MobiDB-lite"/>
    </source>
</evidence>
<evidence type="ECO:0000269" key="4">
    <source>
    </source>
</evidence>
<evidence type="ECO:0000303" key="5">
    <source>
    </source>
</evidence>
<evidence type="ECO:0000305" key="6"/>
<evidence type="ECO:0000305" key="7">
    <source>
    </source>
</evidence>
<keyword id="KW-1003">Cell membrane</keyword>
<keyword id="KW-0325">Glycoprotein</keyword>
<keyword id="KW-0406">Ion transport</keyword>
<keyword id="KW-0408">Iron</keyword>
<keyword id="KW-0410">Iron transport</keyword>
<keyword id="KW-0472">Membrane</keyword>
<keyword id="KW-1185">Reference proteome</keyword>
<keyword id="KW-1278">Translocase</keyword>
<keyword id="KW-0812">Transmembrane</keyword>
<keyword id="KW-1133">Transmembrane helix</keyword>
<keyword id="KW-0813">Transport</keyword>
<gene>
    <name evidence="5" type="primary">mirD</name>
    <name type="ORF">AFUA_3G03440</name>
</gene>
<protein>
    <recommendedName>
        <fullName evidence="5">MFS siderochrome iron transporter D</fullName>
        <ecNumber evidence="4">7.-.-.-</ecNumber>
    </recommendedName>
</protein>
<dbReference type="EC" id="7.-.-.-" evidence="4"/>
<dbReference type="EMBL" id="AAHF01000010">
    <property type="protein sequence ID" value="EAL86626.2"/>
    <property type="molecule type" value="Genomic_DNA"/>
</dbReference>
<dbReference type="RefSeq" id="XP_748664.2">
    <property type="nucleotide sequence ID" value="XM_743571.2"/>
</dbReference>
<dbReference type="SMR" id="Q4WF51"/>
<dbReference type="EnsemblFungi" id="EAL86626">
    <property type="protein sequence ID" value="EAL86626"/>
    <property type="gene ID" value="AFUA_3G03440"/>
</dbReference>
<dbReference type="GeneID" id="3506156"/>
<dbReference type="KEGG" id="afm:AFUA_3G03440"/>
<dbReference type="VEuPathDB" id="FungiDB:Afu3g03440"/>
<dbReference type="eggNOG" id="KOG0254">
    <property type="taxonomic scope" value="Eukaryota"/>
</dbReference>
<dbReference type="HOGENOM" id="CLU_012970_1_0_1"/>
<dbReference type="InParanoid" id="Q4WF51"/>
<dbReference type="OMA" id="WTHTLPG"/>
<dbReference type="OrthoDB" id="4078873at2759"/>
<dbReference type="Proteomes" id="UP000002530">
    <property type="component" value="Chromosome 3"/>
</dbReference>
<dbReference type="GO" id="GO:0005886">
    <property type="term" value="C:plasma membrane"/>
    <property type="evidence" value="ECO:0000318"/>
    <property type="project" value="GO_Central"/>
</dbReference>
<dbReference type="GO" id="GO:0022857">
    <property type="term" value="F:transmembrane transporter activity"/>
    <property type="evidence" value="ECO:0000318"/>
    <property type="project" value="GO_Central"/>
</dbReference>
<dbReference type="GO" id="GO:0010106">
    <property type="term" value="P:cellular response to iron ion starvation"/>
    <property type="evidence" value="ECO:0000270"/>
    <property type="project" value="AspGD"/>
</dbReference>
<dbReference type="GO" id="GO:0006826">
    <property type="term" value="P:iron ion transport"/>
    <property type="evidence" value="ECO:0007669"/>
    <property type="project" value="UniProtKB-KW"/>
</dbReference>
<dbReference type="GO" id="GO:0055085">
    <property type="term" value="P:transmembrane transport"/>
    <property type="evidence" value="ECO:0000318"/>
    <property type="project" value="GO_Central"/>
</dbReference>
<dbReference type="FunFam" id="1.20.1250.20:FF:000302">
    <property type="entry name" value="MFS siderochrome iron transporter MirB"/>
    <property type="match status" value="1"/>
</dbReference>
<dbReference type="FunFam" id="1.20.1250.20:FF:000284">
    <property type="entry name" value="Siderophore iron transporter mirB"/>
    <property type="match status" value="1"/>
</dbReference>
<dbReference type="Gene3D" id="1.20.1250.20">
    <property type="entry name" value="MFS general substrate transporter like domains"/>
    <property type="match status" value="2"/>
</dbReference>
<dbReference type="InterPro" id="IPR011701">
    <property type="entry name" value="MFS"/>
</dbReference>
<dbReference type="InterPro" id="IPR020846">
    <property type="entry name" value="MFS_dom"/>
</dbReference>
<dbReference type="InterPro" id="IPR036259">
    <property type="entry name" value="MFS_trans_sf"/>
</dbReference>
<dbReference type="PANTHER" id="PTHR23501">
    <property type="entry name" value="MAJOR FACILITATOR SUPERFAMILY"/>
    <property type="match status" value="1"/>
</dbReference>
<dbReference type="PANTHER" id="PTHR23501:SF55">
    <property type="entry name" value="SIDEROPHORE IRON TRANSPORTER, PUTATIVE (AFU_ORTHOLOGUE AFUA_3G03440)-RELATED"/>
    <property type="match status" value="1"/>
</dbReference>
<dbReference type="Pfam" id="PF07690">
    <property type="entry name" value="MFS_1"/>
    <property type="match status" value="1"/>
</dbReference>
<dbReference type="SUPFAM" id="SSF103473">
    <property type="entry name" value="MFS general substrate transporter"/>
    <property type="match status" value="1"/>
</dbReference>
<dbReference type="PROSITE" id="PS50850">
    <property type="entry name" value="MFS"/>
    <property type="match status" value="1"/>
</dbReference>
<accession>Q4WF51</accession>
<name>MIRD_ASPFU</name>